<name>RL7_BACC0</name>
<feature type="chain" id="PRO_1000121388" description="Large ribosomal subunit protein bL12">
    <location>
        <begin position="1"/>
        <end position="119"/>
    </location>
</feature>
<accession>B7JKA8</accession>
<organism>
    <name type="scientific">Bacillus cereus (strain AH820)</name>
    <dbReference type="NCBI Taxonomy" id="405535"/>
    <lineage>
        <taxon>Bacteria</taxon>
        <taxon>Bacillati</taxon>
        <taxon>Bacillota</taxon>
        <taxon>Bacilli</taxon>
        <taxon>Bacillales</taxon>
        <taxon>Bacillaceae</taxon>
        <taxon>Bacillus</taxon>
        <taxon>Bacillus cereus group</taxon>
    </lineage>
</organism>
<comment type="function">
    <text evidence="1">Forms part of the ribosomal stalk which helps the ribosome interact with GTP-bound translation factors. Is thus essential for accurate translation.</text>
</comment>
<comment type="subunit">
    <text evidence="1">Homodimer. Part of the ribosomal stalk of the 50S ribosomal subunit. Forms a multimeric L10(L12)X complex, where L10 forms an elongated spine to which 2 to 4 L12 dimers bind in a sequential fashion. Binds GTP-bound translation factors.</text>
</comment>
<comment type="similarity">
    <text evidence="1">Belongs to the bacterial ribosomal protein bL12 family.</text>
</comment>
<proteinExistence type="inferred from homology"/>
<sequence>MTKEQIIEAVKSMTVLELNDLVKAIEEEFGVTAAAPVAVAGGAGEAAAEKTEFDVELTSAGAQKIKVIKVVREITGLGLKEAKELVDNTPKVIKEAAAKEEAEEIKAKLEEVGAAVEVK</sequence>
<evidence type="ECO:0000255" key="1">
    <source>
        <dbReference type="HAMAP-Rule" id="MF_00368"/>
    </source>
</evidence>
<evidence type="ECO:0000305" key="2"/>
<protein>
    <recommendedName>
        <fullName evidence="1">Large ribosomal subunit protein bL12</fullName>
    </recommendedName>
    <alternativeName>
        <fullName evidence="2">50S ribosomal protein L7/L12</fullName>
    </alternativeName>
</protein>
<reference key="1">
    <citation type="submission" date="2008-10" db="EMBL/GenBank/DDBJ databases">
        <title>Genome sequence of Bacillus cereus AH820.</title>
        <authorList>
            <person name="Dodson R.J."/>
            <person name="Durkin A.S."/>
            <person name="Rosovitz M.J."/>
            <person name="Rasko D.A."/>
            <person name="Hoffmaster A."/>
            <person name="Ravel J."/>
            <person name="Sutton G."/>
        </authorList>
    </citation>
    <scope>NUCLEOTIDE SEQUENCE [LARGE SCALE GENOMIC DNA]</scope>
    <source>
        <strain>AH820</strain>
    </source>
</reference>
<dbReference type="EMBL" id="CP001283">
    <property type="protein sequence ID" value="ACK87704.1"/>
    <property type="molecule type" value="Genomic_DNA"/>
</dbReference>
<dbReference type="RefSeq" id="WP_000159736.1">
    <property type="nucleotide sequence ID" value="NC_011773.1"/>
</dbReference>
<dbReference type="SMR" id="B7JKA8"/>
<dbReference type="GeneID" id="93010953"/>
<dbReference type="KEGG" id="bcu:BCAH820_0111"/>
<dbReference type="HOGENOM" id="CLU_086499_3_2_9"/>
<dbReference type="Proteomes" id="UP000001363">
    <property type="component" value="Chromosome"/>
</dbReference>
<dbReference type="GO" id="GO:0022625">
    <property type="term" value="C:cytosolic large ribosomal subunit"/>
    <property type="evidence" value="ECO:0007669"/>
    <property type="project" value="TreeGrafter"/>
</dbReference>
<dbReference type="GO" id="GO:0003729">
    <property type="term" value="F:mRNA binding"/>
    <property type="evidence" value="ECO:0007669"/>
    <property type="project" value="TreeGrafter"/>
</dbReference>
<dbReference type="GO" id="GO:0003735">
    <property type="term" value="F:structural constituent of ribosome"/>
    <property type="evidence" value="ECO:0007669"/>
    <property type="project" value="InterPro"/>
</dbReference>
<dbReference type="GO" id="GO:0006412">
    <property type="term" value="P:translation"/>
    <property type="evidence" value="ECO:0007669"/>
    <property type="project" value="UniProtKB-UniRule"/>
</dbReference>
<dbReference type="CDD" id="cd00387">
    <property type="entry name" value="Ribosomal_L7_L12"/>
    <property type="match status" value="1"/>
</dbReference>
<dbReference type="FunFam" id="1.20.5.710:FF:000002">
    <property type="entry name" value="50S ribosomal protein L7/L12"/>
    <property type="match status" value="1"/>
</dbReference>
<dbReference type="FunFam" id="3.30.1390.10:FF:000001">
    <property type="entry name" value="50S ribosomal protein L7/L12"/>
    <property type="match status" value="1"/>
</dbReference>
<dbReference type="Gene3D" id="3.30.1390.10">
    <property type="match status" value="1"/>
</dbReference>
<dbReference type="Gene3D" id="1.20.5.710">
    <property type="entry name" value="Single helix bin"/>
    <property type="match status" value="1"/>
</dbReference>
<dbReference type="HAMAP" id="MF_00368">
    <property type="entry name" value="Ribosomal_bL12"/>
    <property type="match status" value="1"/>
</dbReference>
<dbReference type="InterPro" id="IPR000206">
    <property type="entry name" value="Ribosomal_bL12"/>
</dbReference>
<dbReference type="InterPro" id="IPR013823">
    <property type="entry name" value="Ribosomal_bL12_C"/>
</dbReference>
<dbReference type="InterPro" id="IPR014719">
    <property type="entry name" value="Ribosomal_bL12_C/ClpS-like"/>
</dbReference>
<dbReference type="InterPro" id="IPR008932">
    <property type="entry name" value="Ribosomal_bL12_oligo"/>
</dbReference>
<dbReference type="InterPro" id="IPR036235">
    <property type="entry name" value="Ribosomal_bL12_oligo_N_sf"/>
</dbReference>
<dbReference type="NCBIfam" id="TIGR00855">
    <property type="entry name" value="L12"/>
    <property type="match status" value="1"/>
</dbReference>
<dbReference type="PANTHER" id="PTHR45987">
    <property type="entry name" value="39S RIBOSOMAL PROTEIN L12"/>
    <property type="match status" value="1"/>
</dbReference>
<dbReference type="PANTHER" id="PTHR45987:SF4">
    <property type="entry name" value="LARGE RIBOSOMAL SUBUNIT PROTEIN BL12M"/>
    <property type="match status" value="1"/>
</dbReference>
<dbReference type="Pfam" id="PF00542">
    <property type="entry name" value="Ribosomal_L12"/>
    <property type="match status" value="1"/>
</dbReference>
<dbReference type="Pfam" id="PF16320">
    <property type="entry name" value="Ribosomal_L12_N"/>
    <property type="match status" value="1"/>
</dbReference>
<dbReference type="SUPFAM" id="SSF54736">
    <property type="entry name" value="ClpS-like"/>
    <property type="match status" value="1"/>
</dbReference>
<dbReference type="SUPFAM" id="SSF48300">
    <property type="entry name" value="Ribosomal protein L7/12, oligomerisation (N-terminal) domain"/>
    <property type="match status" value="1"/>
</dbReference>
<keyword id="KW-0687">Ribonucleoprotein</keyword>
<keyword id="KW-0689">Ribosomal protein</keyword>
<gene>
    <name evidence="1" type="primary">rplL</name>
    <name type="ordered locus">BCAH820_0111</name>
</gene>